<protein>
    <recommendedName>
        <fullName evidence="1">Dihydroxy-acid dehydratase</fullName>
        <shortName evidence="1">DAD</shortName>
        <ecNumber evidence="1">4.2.1.9</ecNumber>
    </recommendedName>
</protein>
<reference key="1">
    <citation type="journal article" date="2004" name="Nat. Biotechnol.">
        <title>Complete genome sequence of the metabolically versatile photosynthetic bacterium Rhodopseudomonas palustris.</title>
        <authorList>
            <person name="Larimer F.W."/>
            <person name="Chain P."/>
            <person name="Hauser L."/>
            <person name="Lamerdin J.E."/>
            <person name="Malfatti S."/>
            <person name="Do L."/>
            <person name="Land M.L."/>
            <person name="Pelletier D.A."/>
            <person name="Beatty J.T."/>
            <person name="Lang A.S."/>
            <person name="Tabita F.R."/>
            <person name="Gibson J.L."/>
            <person name="Hanson T.E."/>
            <person name="Bobst C."/>
            <person name="Torres y Torres J.L."/>
            <person name="Peres C."/>
            <person name="Harrison F.H."/>
            <person name="Gibson J."/>
            <person name="Harwood C.S."/>
        </authorList>
    </citation>
    <scope>NUCLEOTIDE SEQUENCE [LARGE SCALE GENOMIC DNA]</scope>
    <source>
        <strain>ATCC BAA-98 / CGA009</strain>
    </source>
</reference>
<dbReference type="EC" id="4.2.1.9" evidence="1"/>
<dbReference type="EMBL" id="BX572597">
    <property type="protein sequence ID" value="CAE26905.1"/>
    <property type="molecule type" value="Genomic_DNA"/>
</dbReference>
<dbReference type="RefSeq" id="WP_011157024.1">
    <property type="nucleotide sequence ID" value="NZ_CP116810.1"/>
</dbReference>
<dbReference type="SMR" id="Q6N9S5"/>
<dbReference type="STRING" id="258594.RPA1463"/>
<dbReference type="GeneID" id="66892491"/>
<dbReference type="eggNOG" id="COG0129">
    <property type="taxonomic scope" value="Bacteria"/>
</dbReference>
<dbReference type="HOGENOM" id="CLU_014271_4_3_5"/>
<dbReference type="PhylomeDB" id="Q6N9S5"/>
<dbReference type="UniPathway" id="UPA00047">
    <property type="reaction ID" value="UER00057"/>
</dbReference>
<dbReference type="UniPathway" id="UPA00049">
    <property type="reaction ID" value="UER00061"/>
</dbReference>
<dbReference type="GO" id="GO:0005829">
    <property type="term" value="C:cytosol"/>
    <property type="evidence" value="ECO:0007669"/>
    <property type="project" value="TreeGrafter"/>
</dbReference>
<dbReference type="GO" id="GO:0051537">
    <property type="term" value="F:2 iron, 2 sulfur cluster binding"/>
    <property type="evidence" value="ECO:0007669"/>
    <property type="project" value="UniProtKB-UniRule"/>
</dbReference>
<dbReference type="GO" id="GO:0004160">
    <property type="term" value="F:dihydroxy-acid dehydratase activity"/>
    <property type="evidence" value="ECO:0007669"/>
    <property type="project" value="UniProtKB-UniRule"/>
</dbReference>
<dbReference type="GO" id="GO:0000287">
    <property type="term" value="F:magnesium ion binding"/>
    <property type="evidence" value="ECO:0007669"/>
    <property type="project" value="UniProtKB-UniRule"/>
</dbReference>
<dbReference type="GO" id="GO:0009097">
    <property type="term" value="P:isoleucine biosynthetic process"/>
    <property type="evidence" value="ECO:0007669"/>
    <property type="project" value="UniProtKB-UniRule"/>
</dbReference>
<dbReference type="GO" id="GO:0009099">
    <property type="term" value="P:L-valine biosynthetic process"/>
    <property type="evidence" value="ECO:0007669"/>
    <property type="project" value="UniProtKB-UniRule"/>
</dbReference>
<dbReference type="FunFam" id="3.50.30.80:FF:000001">
    <property type="entry name" value="Dihydroxy-acid dehydratase"/>
    <property type="match status" value="1"/>
</dbReference>
<dbReference type="Gene3D" id="3.50.30.80">
    <property type="entry name" value="IlvD/EDD C-terminal domain-like"/>
    <property type="match status" value="1"/>
</dbReference>
<dbReference type="HAMAP" id="MF_00012">
    <property type="entry name" value="IlvD"/>
    <property type="match status" value="1"/>
</dbReference>
<dbReference type="InterPro" id="IPR042096">
    <property type="entry name" value="Dihydro-acid_dehy_C"/>
</dbReference>
<dbReference type="InterPro" id="IPR004404">
    <property type="entry name" value="DihydroxyA_deHydtase"/>
</dbReference>
<dbReference type="InterPro" id="IPR020558">
    <property type="entry name" value="DiOHA_6PGluconate_deHydtase_CS"/>
</dbReference>
<dbReference type="InterPro" id="IPR056740">
    <property type="entry name" value="ILV_EDD_C"/>
</dbReference>
<dbReference type="InterPro" id="IPR000581">
    <property type="entry name" value="ILV_EDD_N"/>
</dbReference>
<dbReference type="InterPro" id="IPR037237">
    <property type="entry name" value="IlvD/EDD_N"/>
</dbReference>
<dbReference type="NCBIfam" id="TIGR00110">
    <property type="entry name" value="ilvD"/>
    <property type="match status" value="1"/>
</dbReference>
<dbReference type="NCBIfam" id="NF009103">
    <property type="entry name" value="PRK12448.1"/>
    <property type="match status" value="1"/>
</dbReference>
<dbReference type="PANTHER" id="PTHR43661">
    <property type="entry name" value="D-XYLONATE DEHYDRATASE"/>
    <property type="match status" value="1"/>
</dbReference>
<dbReference type="PANTHER" id="PTHR43661:SF3">
    <property type="entry name" value="D-XYLONATE DEHYDRATASE YAGF-RELATED"/>
    <property type="match status" value="1"/>
</dbReference>
<dbReference type="Pfam" id="PF24877">
    <property type="entry name" value="ILV_EDD_C"/>
    <property type="match status" value="1"/>
</dbReference>
<dbReference type="Pfam" id="PF00920">
    <property type="entry name" value="ILVD_EDD_N"/>
    <property type="match status" value="1"/>
</dbReference>
<dbReference type="SUPFAM" id="SSF143975">
    <property type="entry name" value="IlvD/EDD N-terminal domain-like"/>
    <property type="match status" value="1"/>
</dbReference>
<dbReference type="SUPFAM" id="SSF52016">
    <property type="entry name" value="LeuD/IlvD-like"/>
    <property type="match status" value="1"/>
</dbReference>
<dbReference type="PROSITE" id="PS00886">
    <property type="entry name" value="ILVD_EDD_1"/>
    <property type="match status" value="1"/>
</dbReference>
<dbReference type="PROSITE" id="PS00887">
    <property type="entry name" value="ILVD_EDD_2"/>
    <property type="match status" value="1"/>
</dbReference>
<comment type="function">
    <text evidence="1">Functions in the biosynthesis of branched-chain amino acids. Catalyzes the dehydration of (2R,3R)-2,3-dihydroxy-3-methylpentanoate (2,3-dihydroxy-3-methylvalerate) into 2-oxo-3-methylpentanoate (2-oxo-3-methylvalerate) and of (2R)-2,3-dihydroxy-3-methylbutanoate (2,3-dihydroxyisovalerate) into 2-oxo-3-methylbutanoate (2-oxoisovalerate), the penultimate precursor to L-isoleucine and L-valine, respectively.</text>
</comment>
<comment type="catalytic activity">
    <reaction evidence="1">
        <text>(2R)-2,3-dihydroxy-3-methylbutanoate = 3-methyl-2-oxobutanoate + H2O</text>
        <dbReference type="Rhea" id="RHEA:24809"/>
        <dbReference type="ChEBI" id="CHEBI:11851"/>
        <dbReference type="ChEBI" id="CHEBI:15377"/>
        <dbReference type="ChEBI" id="CHEBI:49072"/>
        <dbReference type="EC" id="4.2.1.9"/>
    </reaction>
    <physiologicalReaction direction="left-to-right" evidence="1">
        <dbReference type="Rhea" id="RHEA:24810"/>
    </physiologicalReaction>
</comment>
<comment type="catalytic activity">
    <reaction evidence="1">
        <text>(2R,3R)-2,3-dihydroxy-3-methylpentanoate = (S)-3-methyl-2-oxopentanoate + H2O</text>
        <dbReference type="Rhea" id="RHEA:27694"/>
        <dbReference type="ChEBI" id="CHEBI:15377"/>
        <dbReference type="ChEBI" id="CHEBI:35146"/>
        <dbReference type="ChEBI" id="CHEBI:49258"/>
        <dbReference type="EC" id="4.2.1.9"/>
    </reaction>
    <physiologicalReaction direction="left-to-right" evidence="1">
        <dbReference type="Rhea" id="RHEA:27695"/>
    </physiologicalReaction>
</comment>
<comment type="cofactor">
    <cofactor evidence="1">
        <name>[2Fe-2S] cluster</name>
        <dbReference type="ChEBI" id="CHEBI:190135"/>
    </cofactor>
    <text evidence="1">Binds 1 [2Fe-2S] cluster per subunit. This cluster acts as a Lewis acid cofactor.</text>
</comment>
<comment type="cofactor">
    <cofactor evidence="1">
        <name>Mg(2+)</name>
        <dbReference type="ChEBI" id="CHEBI:18420"/>
    </cofactor>
</comment>
<comment type="pathway">
    <text evidence="1">Amino-acid biosynthesis; L-isoleucine biosynthesis; L-isoleucine from 2-oxobutanoate: step 3/4.</text>
</comment>
<comment type="pathway">
    <text evidence="1">Amino-acid biosynthesis; L-valine biosynthesis; L-valine from pyruvate: step 3/4.</text>
</comment>
<comment type="subunit">
    <text evidence="1">Homodimer.</text>
</comment>
<comment type="similarity">
    <text evidence="1">Belongs to the IlvD/Edd family.</text>
</comment>
<sequence length="618" mass="65722">MPAYRSRTTTHGRNMAGARGLWRATGMKDSDFGKPIIAVVNSFTQFVPGHVHLKDLGQLVAREIEAAGGVAKEFNTIAVDDGIAMGHDGMLYSLPSRELIADSVEYMVNAHCADAMVCISNCDKITPGMLMAAMRLNIPAVFVSGGPMEAGKVVLKGKTHAVDLIDAMVAAADSAMSDEDVQTMERSACPTCGSCSGMFTANSMNCLTEALGLSLPGNGSVLATHADRKRLFVEAGHTIVDLARRYYEGDDASVLPRNIANFKAFENAMTLDIAMGGSTNTVLHLLAAAREAELDFSMKDIDRLSRRVPCLSKIAPSVSDVHMEDVHRAGGIMAILGELDRAGLLDTSCTTVHSETLGAALARWDIRQSNSESVRTFFRAAPGGVPSQTAFSQDRRYDELDLDREKGVIRDAAHAFSKDGGLAVLYGNIALDGCIVKTAGVDASILTFSGPVKVFESQDDAVSAILTNKIVAGDVVVIRYEGPRGGPGMQEMLYPTSYLKSKGLGKACALITDGRFSGGTSGLSIGHVSPEAAEGGLIGLVRDGDRISIDIPNRTISLDVSEAELAKRGEEERARGEAAWTPKDRKRNVSAALQAYAMLTTSAANGAVRDVKRRFGKN</sequence>
<organism>
    <name type="scientific">Rhodopseudomonas palustris (strain ATCC BAA-98 / CGA009)</name>
    <dbReference type="NCBI Taxonomy" id="258594"/>
    <lineage>
        <taxon>Bacteria</taxon>
        <taxon>Pseudomonadati</taxon>
        <taxon>Pseudomonadota</taxon>
        <taxon>Alphaproteobacteria</taxon>
        <taxon>Hyphomicrobiales</taxon>
        <taxon>Nitrobacteraceae</taxon>
        <taxon>Rhodopseudomonas</taxon>
    </lineage>
</organism>
<name>ILVD_RHOPA</name>
<feature type="chain" id="PRO_0000225418" description="Dihydroxy-acid dehydratase">
    <location>
        <begin position="1"/>
        <end position="618"/>
    </location>
</feature>
<feature type="active site" description="Proton acceptor" evidence="1">
    <location>
        <position position="517"/>
    </location>
</feature>
<feature type="binding site" evidence="1">
    <location>
        <position position="81"/>
    </location>
    <ligand>
        <name>Mg(2+)</name>
        <dbReference type="ChEBI" id="CHEBI:18420"/>
    </ligand>
</feature>
<feature type="binding site" evidence="1">
    <location>
        <position position="122"/>
    </location>
    <ligand>
        <name>[2Fe-2S] cluster</name>
        <dbReference type="ChEBI" id="CHEBI:190135"/>
    </ligand>
</feature>
<feature type="binding site" evidence="1">
    <location>
        <position position="123"/>
    </location>
    <ligand>
        <name>Mg(2+)</name>
        <dbReference type="ChEBI" id="CHEBI:18420"/>
    </ligand>
</feature>
<feature type="binding site" description="via carbamate group" evidence="1">
    <location>
        <position position="124"/>
    </location>
    <ligand>
        <name>Mg(2+)</name>
        <dbReference type="ChEBI" id="CHEBI:18420"/>
    </ligand>
</feature>
<feature type="binding site" evidence="1">
    <location>
        <position position="195"/>
    </location>
    <ligand>
        <name>[2Fe-2S] cluster</name>
        <dbReference type="ChEBI" id="CHEBI:190135"/>
    </ligand>
</feature>
<feature type="binding site" evidence="1">
    <location>
        <position position="491"/>
    </location>
    <ligand>
        <name>Mg(2+)</name>
        <dbReference type="ChEBI" id="CHEBI:18420"/>
    </ligand>
</feature>
<feature type="modified residue" description="N6-carboxylysine" evidence="1">
    <location>
        <position position="124"/>
    </location>
</feature>
<accession>Q6N9S5</accession>
<proteinExistence type="inferred from homology"/>
<gene>
    <name evidence="1" type="primary">ilvD</name>
    <name type="ordered locus">RPA1463</name>
</gene>
<keyword id="KW-0001">2Fe-2S</keyword>
<keyword id="KW-0028">Amino-acid biosynthesis</keyword>
<keyword id="KW-0100">Branched-chain amino acid biosynthesis</keyword>
<keyword id="KW-0408">Iron</keyword>
<keyword id="KW-0411">Iron-sulfur</keyword>
<keyword id="KW-0456">Lyase</keyword>
<keyword id="KW-0460">Magnesium</keyword>
<keyword id="KW-0479">Metal-binding</keyword>
<evidence type="ECO:0000255" key="1">
    <source>
        <dbReference type="HAMAP-Rule" id="MF_00012"/>
    </source>
</evidence>